<evidence type="ECO:0000255" key="1">
    <source>
        <dbReference type="HAMAP-Rule" id="MF_00150"/>
    </source>
</evidence>
<keyword id="KW-0028">Amino-acid biosynthesis</keyword>
<keyword id="KW-0055">Arginine biosynthesis</keyword>
<keyword id="KW-0963">Cytoplasm</keyword>
<keyword id="KW-0521">NADP</keyword>
<keyword id="KW-0560">Oxidoreductase</keyword>
<keyword id="KW-1185">Reference proteome</keyword>
<organism>
    <name type="scientific">Akkermansia muciniphila (strain ATCC BAA-835 / DSM 22959 / JCM 33894 / BCRC 81048 / CCUG 64013 / CIP 107961 / Muc)</name>
    <dbReference type="NCBI Taxonomy" id="349741"/>
    <lineage>
        <taxon>Bacteria</taxon>
        <taxon>Pseudomonadati</taxon>
        <taxon>Verrucomicrobiota</taxon>
        <taxon>Verrucomicrobiia</taxon>
        <taxon>Verrucomicrobiales</taxon>
        <taxon>Akkermansiaceae</taxon>
        <taxon>Akkermansia</taxon>
    </lineage>
</organism>
<sequence>MKQVQVAVVGASGYTGQELLRILLNHRGVKLVCATSRQYAGQPLWEVFPRFRQVPGSGLKFTDSDVEAIAATGAEVAFLALPHGVAASYARGLVDRGVRVIDLSADFRLDSPDVYEEYYGNPHPDTALMQEAVYGLPEWRREEIARARIVASPGCYPTSILLPLIPLFRAGMLEPEDVVACSGSGVSGAGRKASIPLLFCECNESFHAYGVPKHRHLSEIEQELSHAAGETVVMSFTPHLIPVNTGICSTITAKVKKGADPESVGRLLEEAYAAAPFVRLLGRNQPADTKNVTRTNCVDIGWAYDPRTNRVILMSAEDNVVKGAGGQAVQSFNIMCGFDETEGLWVL</sequence>
<proteinExistence type="inferred from homology"/>
<feature type="chain" id="PRO_1000123226" description="N-acetyl-gamma-glutamyl-phosphate reductase">
    <location>
        <begin position="1"/>
        <end position="347"/>
    </location>
</feature>
<feature type="active site" evidence="1">
    <location>
        <position position="155"/>
    </location>
</feature>
<accession>B2UKZ6</accession>
<comment type="function">
    <text evidence="1">Catalyzes the NADPH-dependent reduction of N-acetyl-5-glutamyl phosphate to yield N-acetyl-L-glutamate 5-semialdehyde.</text>
</comment>
<comment type="catalytic activity">
    <reaction evidence="1">
        <text>N-acetyl-L-glutamate 5-semialdehyde + phosphate + NADP(+) = N-acetyl-L-glutamyl 5-phosphate + NADPH + H(+)</text>
        <dbReference type="Rhea" id="RHEA:21588"/>
        <dbReference type="ChEBI" id="CHEBI:15378"/>
        <dbReference type="ChEBI" id="CHEBI:29123"/>
        <dbReference type="ChEBI" id="CHEBI:43474"/>
        <dbReference type="ChEBI" id="CHEBI:57783"/>
        <dbReference type="ChEBI" id="CHEBI:57936"/>
        <dbReference type="ChEBI" id="CHEBI:58349"/>
        <dbReference type="EC" id="1.2.1.38"/>
    </reaction>
</comment>
<comment type="pathway">
    <text evidence="1">Amino-acid biosynthesis; L-arginine biosynthesis; N(2)-acetyl-L-ornithine from L-glutamate: step 3/4.</text>
</comment>
<comment type="subcellular location">
    <subcellularLocation>
        <location evidence="1">Cytoplasm</location>
    </subcellularLocation>
</comment>
<comment type="similarity">
    <text evidence="1">Belongs to the NAGSA dehydrogenase family. Type 1 subfamily.</text>
</comment>
<reference key="1">
    <citation type="journal article" date="2011" name="PLoS ONE">
        <title>The genome of Akkermansia muciniphila, a dedicated intestinal mucin degrader, and its use in exploring intestinal metagenomes.</title>
        <authorList>
            <person name="van Passel M.W."/>
            <person name="Kant R."/>
            <person name="Zoetendal E.G."/>
            <person name="Plugge C.M."/>
            <person name="Derrien M."/>
            <person name="Malfatti S.A."/>
            <person name="Chain P.S."/>
            <person name="Woyke T."/>
            <person name="Palva A."/>
            <person name="de Vos W.M."/>
            <person name="Smidt H."/>
        </authorList>
    </citation>
    <scope>NUCLEOTIDE SEQUENCE [LARGE SCALE GENOMIC DNA]</scope>
    <source>
        <strain>ATCC BAA-835 / DSM 22959 / JCM 33894 / BCRC 81048 / CCUG 64013 / CIP 107961 / Muc</strain>
    </source>
</reference>
<protein>
    <recommendedName>
        <fullName evidence="1">N-acetyl-gamma-glutamyl-phosphate reductase</fullName>
        <shortName evidence="1">AGPR</shortName>
        <ecNumber evidence="1">1.2.1.38</ecNumber>
    </recommendedName>
    <alternativeName>
        <fullName evidence="1">N-acetyl-glutamate semialdehyde dehydrogenase</fullName>
        <shortName evidence="1">NAGSA dehydrogenase</shortName>
    </alternativeName>
</protein>
<dbReference type="EC" id="1.2.1.38" evidence="1"/>
<dbReference type="EMBL" id="CP001071">
    <property type="protein sequence ID" value="ACD05269.1"/>
    <property type="molecule type" value="Genomic_DNA"/>
</dbReference>
<dbReference type="RefSeq" id="WP_012420484.1">
    <property type="nucleotide sequence ID" value="NC_010655.1"/>
</dbReference>
<dbReference type="SMR" id="B2UKZ6"/>
<dbReference type="STRING" id="349741.Amuc_1447"/>
<dbReference type="PaxDb" id="349741-Amuc_1447"/>
<dbReference type="KEGG" id="amu:Amuc_1447"/>
<dbReference type="eggNOG" id="COG0002">
    <property type="taxonomic scope" value="Bacteria"/>
</dbReference>
<dbReference type="HOGENOM" id="CLU_006384_0_1_0"/>
<dbReference type="OrthoDB" id="9801289at2"/>
<dbReference type="BioCyc" id="AMUC349741:G1GBX-1548-MONOMER"/>
<dbReference type="UniPathway" id="UPA00068">
    <property type="reaction ID" value="UER00108"/>
</dbReference>
<dbReference type="Proteomes" id="UP000001031">
    <property type="component" value="Chromosome"/>
</dbReference>
<dbReference type="GO" id="GO:0005737">
    <property type="term" value="C:cytoplasm"/>
    <property type="evidence" value="ECO:0007669"/>
    <property type="project" value="UniProtKB-SubCell"/>
</dbReference>
<dbReference type="GO" id="GO:0003942">
    <property type="term" value="F:N-acetyl-gamma-glutamyl-phosphate reductase activity"/>
    <property type="evidence" value="ECO:0007669"/>
    <property type="project" value="UniProtKB-UniRule"/>
</dbReference>
<dbReference type="GO" id="GO:0051287">
    <property type="term" value="F:NAD binding"/>
    <property type="evidence" value="ECO:0007669"/>
    <property type="project" value="InterPro"/>
</dbReference>
<dbReference type="GO" id="GO:0070401">
    <property type="term" value="F:NADP+ binding"/>
    <property type="evidence" value="ECO:0007669"/>
    <property type="project" value="InterPro"/>
</dbReference>
<dbReference type="GO" id="GO:0006526">
    <property type="term" value="P:L-arginine biosynthetic process"/>
    <property type="evidence" value="ECO:0007669"/>
    <property type="project" value="UniProtKB-UniRule"/>
</dbReference>
<dbReference type="CDD" id="cd23934">
    <property type="entry name" value="AGPR_1_C"/>
    <property type="match status" value="1"/>
</dbReference>
<dbReference type="CDD" id="cd17895">
    <property type="entry name" value="AGPR_1_N"/>
    <property type="match status" value="1"/>
</dbReference>
<dbReference type="FunFam" id="3.30.360.10:FF:000014">
    <property type="entry name" value="N-acetyl-gamma-glutamyl-phosphate reductase"/>
    <property type="match status" value="1"/>
</dbReference>
<dbReference type="Gene3D" id="3.30.360.10">
    <property type="entry name" value="Dihydrodipicolinate Reductase, domain 2"/>
    <property type="match status" value="1"/>
</dbReference>
<dbReference type="Gene3D" id="3.40.50.720">
    <property type="entry name" value="NAD(P)-binding Rossmann-like Domain"/>
    <property type="match status" value="1"/>
</dbReference>
<dbReference type="HAMAP" id="MF_00150">
    <property type="entry name" value="ArgC_type1"/>
    <property type="match status" value="1"/>
</dbReference>
<dbReference type="InterPro" id="IPR023013">
    <property type="entry name" value="AGPR_AS"/>
</dbReference>
<dbReference type="InterPro" id="IPR000706">
    <property type="entry name" value="AGPR_type-1"/>
</dbReference>
<dbReference type="InterPro" id="IPR036291">
    <property type="entry name" value="NAD(P)-bd_dom_sf"/>
</dbReference>
<dbReference type="InterPro" id="IPR050085">
    <property type="entry name" value="NAGSA_dehydrogenase"/>
</dbReference>
<dbReference type="InterPro" id="IPR000534">
    <property type="entry name" value="Semialdehyde_DH_NAD-bd"/>
</dbReference>
<dbReference type="NCBIfam" id="TIGR01850">
    <property type="entry name" value="argC"/>
    <property type="match status" value="1"/>
</dbReference>
<dbReference type="PANTHER" id="PTHR32338:SF10">
    <property type="entry name" value="N-ACETYL-GAMMA-GLUTAMYL-PHOSPHATE REDUCTASE, CHLOROPLASTIC-RELATED"/>
    <property type="match status" value="1"/>
</dbReference>
<dbReference type="PANTHER" id="PTHR32338">
    <property type="entry name" value="N-ACETYL-GAMMA-GLUTAMYL-PHOSPHATE REDUCTASE, CHLOROPLASTIC-RELATED-RELATED"/>
    <property type="match status" value="1"/>
</dbReference>
<dbReference type="Pfam" id="PF01118">
    <property type="entry name" value="Semialdhyde_dh"/>
    <property type="match status" value="1"/>
</dbReference>
<dbReference type="Pfam" id="PF22698">
    <property type="entry name" value="Semialdhyde_dhC_1"/>
    <property type="match status" value="1"/>
</dbReference>
<dbReference type="SMART" id="SM00859">
    <property type="entry name" value="Semialdhyde_dh"/>
    <property type="match status" value="1"/>
</dbReference>
<dbReference type="SUPFAM" id="SSF55347">
    <property type="entry name" value="Glyceraldehyde-3-phosphate dehydrogenase-like, C-terminal domain"/>
    <property type="match status" value="1"/>
</dbReference>
<dbReference type="SUPFAM" id="SSF51735">
    <property type="entry name" value="NAD(P)-binding Rossmann-fold domains"/>
    <property type="match status" value="1"/>
</dbReference>
<dbReference type="PROSITE" id="PS01224">
    <property type="entry name" value="ARGC"/>
    <property type="match status" value="1"/>
</dbReference>
<gene>
    <name evidence="1" type="primary">argC</name>
    <name type="ordered locus">Amuc_1447</name>
</gene>
<name>ARGC_AKKM8</name>